<name>GATC_PELPD</name>
<gene>
    <name evidence="1" type="primary">gatC</name>
    <name type="ordered locus">Ppro_3087</name>
</gene>
<accession>A1ATL2</accession>
<sequence length="95" mass="10519">MKITIADVEHVARLARLELSDEEKQLFAGQMDTILGYVDKLKELNTDGIQPTSHAVPMENAFREDQTRPSIGTAKALANAPDPVLGFFRVPKVIE</sequence>
<evidence type="ECO:0000255" key="1">
    <source>
        <dbReference type="HAMAP-Rule" id="MF_00122"/>
    </source>
</evidence>
<feature type="chain" id="PRO_1000016167" description="Aspartyl/glutamyl-tRNA(Asn/Gln) amidotransferase subunit C">
    <location>
        <begin position="1"/>
        <end position="95"/>
    </location>
</feature>
<keyword id="KW-0067">ATP-binding</keyword>
<keyword id="KW-0436">Ligase</keyword>
<keyword id="KW-0547">Nucleotide-binding</keyword>
<keyword id="KW-0648">Protein biosynthesis</keyword>
<keyword id="KW-1185">Reference proteome</keyword>
<organism>
    <name type="scientific">Pelobacter propionicus (strain DSM 2379 / NBRC 103807 / OttBd1)</name>
    <dbReference type="NCBI Taxonomy" id="338966"/>
    <lineage>
        <taxon>Bacteria</taxon>
        <taxon>Pseudomonadati</taxon>
        <taxon>Thermodesulfobacteriota</taxon>
        <taxon>Desulfuromonadia</taxon>
        <taxon>Desulfuromonadales</taxon>
        <taxon>Desulfuromonadaceae</taxon>
        <taxon>Pelobacter</taxon>
    </lineage>
</organism>
<reference key="1">
    <citation type="submission" date="2006-10" db="EMBL/GenBank/DDBJ databases">
        <title>Complete sequence of chromosome of Pelobacter propionicus DSM 2379.</title>
        <authorList>
            <consortium name="US DOE Joint Genome Institute"/>
            <person name="Copeland A."/>
            <person name="Lucas S."/>
            <person name="Lapidus A."/>
            <person name="Barry K."/>
            <person name="Detter J.C."/>
            <person name="Glavina del Rio T."/>
            <person name="Hammon N."/>
            <person name="Israni S."/>
            <person name="Dalin E."/>
            <person name="Tice H."/>
            <person name="Pitluck S."/>
            <person name="Saunders E."/>
            <person name="Brettin T."/>
            <person name="Bruce D."/>
            <person name="Han C."/>
            <person name="Tapia R."/>
            <person name="Schmutz J."/>
            <person name="Larimer F."/>
            <person name="Land M."/>
            <person name="Hauser L."/>
            <person name="Kyrpides N."/>
            <person name="Kim E."/>
            <person name="Lovley D."/>
            <person name="Richardson P."/>
        </authorList>
    </citation>
    <scope>NUCLEOTIDE SEQUENCE [LARGE SCALE GENOMIC DNA]</scope>
    <source>
        <strain>DSM 2379 / NBRC 103807 / OttBd1</strain>
    </source>
</reference>
<proteinExistence type="inferred from homology"/>
<protein>
    <recommendedName>
        <fullName evidence="1">Aspartyl/glutamyl-tRNA(Asn/Gln) amidotransferase subunit C</fullName>
        <shortName evidence="1">Asp/Glu-ADT subunit C</shortName>
        <ecNumber evidence="1">6.3.5.-</ecNumber>
    </recommendedName>
</protein>
<comment type="function">
    <text evidence="1">Allows the formation of correctly charged Asn-tRNA(Asn) or Gln-tRNA(Gln) through the transamidation of misacylated Asp-tRNA(Asn) or Glu-tRNA(Gln) in organisms which lack either or both of asparaginyl-tRNA or glutaminyl-tRNA synthetases. The reaction takes place in the presence of glutamine and ATP through an activated phospho-Asp-tRNA(Asn) or phospho-Glu-tRNA(Gln).</text>
</comment>
<comment type="catalytic activity">
    <reaction evidence="1">
        <text>L-glutamyl-tRNA(Gln) + L-glutamine + ATP + H2O = L-glutaminyl-tRNA(Gln) + L-glutamate + ADP + phosphate + H(+)</text>
        <dbReference type="Rhea" id="RHEA:17521"/>
        <dbReference type="Rhea" id="RHEA-COMP:9681"/>
        <dbReference type="Rhea" id="RHEA-COMP:9684"/>
        <dbReference type="ChEBI" id="CHEBI:15377"/>
        <dbReference type="ChEBI" id="CHEBI:15378"/>
        <dbReference type="ChEBI" id="CHEBI:29985"/>
        <dbReference type="ChEBI" id="CHEBI:30616"/>
        <dbReference type="ChEBI" id="CHEBI:43474"/>
        <dbReference type="ChEBI" id="CHEBI:58359"/>
        <dbReference type="ChEBI" id="CHEBI:78520"/>
        <dbReference type="ChEBI" id="CHEBI:78521"/>
        <dbReference type="ChEBI" id="CHEBI:456216"/>
    </reaction>
</comment>
<comment type="catalytic activity">
    <reaction evidence="1">
        <text>L-aspartyl-tRNA(Asn) + L-glutamine + ATP + H2O = L-asparaginyl-tRNA(Asn) + L-glutamate + ADP + phosphate + 2 H(+)</text>
        <dbReference type="Rhea" id="RHEA:14513"/>
        <dbReference type="Rhea" id="RHEA-COMP:9674"/>
        <dbReference type="Rhea" id="RHEA-COMP:9677"/>
        <dbReference type="ChEBI" id="CHEBI:15377"/>
        <dbReference type="ChEBI" id="CHEBI:15378"/>
        <dbReference type="ChEBI" id="CHEBI:29985"/>
        <dbReference type="ChEBI" id="CHEBI:30616"/>
        <dbReference type="ChEBI" id="CHEBI:43474"/>
        <dbReference type="ChEBI" id="CHEBI:58359"/>
        <dbReference type="ChEBI" id="CHEBI:78515"/>
        <dbReference type="ChEBI" id="CHEBI:78516"/>
        <dbReference type="ChEBI" id="CHEBI:456216"/>
    </reaction>
</comment>
<comment type="subunit">
    <text evidence="1">Heterotrimer of A, B and C subunits.</text>
</comment>
<comment type="similarity">
    <text evidence="1">Belongs to the GatC family.</text>
</comment>
<dbReference type="EC" id="6.3.5.-" evidence="1"/>
<dbReference type="EMBL" id="CP000482">
    <property type="protein sequence ID" value="ABL00683.1"/>
    <property type="molecule type" value="Genomic_DNA"/>
</dbReference>
<dbReference type="RefSeq" id="WP_011736915.1">
    <property type="nucleotide sequence ID" value="NC_008609.1"/>
</dbReference>
<dbReference type="SMR" id="A1ATL2"/>
<dbReference type="STRING" id="338966.Ppro_3087"/>
<dbReference type="KEGG" id="ppd:Ppro_3087"/>
<dbReference type="eggNOG" id="COG0721">
    <property type="taxonomic scope" value="Bacteria"/>
</dbReference>
<dbReference type="HOGENOM" id="CLU_105899_1_2_7"/>
<dbReference type="OrthoDB" id="9813938at2"/>
<dbReference type="Proteomes" id="UP000006732">
    <property type="component" value="Chromosome"/>
</dbReference>
<dbReference type="GO" id="GO:0050566">
    <property type="term" value="F:asparaginyl-tRNA synthase (glutamine-hydrolyzing) activity"/>
    <property type="evidence" value="ECO:0007669"/>
    <property type="project" value="RHEA"/>
</dbReference>
<dbReference type="GO" id="GO:0005524">
    <property type="term" value="F:ATP binding"/>
    <property type="evidence" value="ECO:0007669"/>
    <property type="project" value="UniProtKB-KW"/>
</dbReference>
<dbReference type="GO" id="GO:0050567">
    <property type="term" value="F:glutaminyl-tRNA synthase (glutamine-hydrolyzing) activity"/>
    <property type="evidence" value="ECO:0007669"/>
    <property type="project" value="UniProtKB-UniRule"/>
</dbReference>
<dbReference type="GO" id="GO:0070681">
    <property type="term" value="P:glutaminyl-tRNAGln biosynthesis via transamidation"/>
    <property type="evidence" value="ECO:0007669"/>
    <property type="project" value="TreeGrafter"/>
</dbReference>
<dbReference type="GO" id="GO:0006450">
    <property type="term" value="P:regulation of translational fidelity"/>
    <property type="evidence" value="ECO:0007669"/>
    <property type="project" value="InterPro"/>
</dbReference>
<dbReference type="GO" id="GO:0006412">
    <property type="term" value="P:translation"/>
    <property type="evidence" value="ECO:0007669"/>
    <property type="project" value="UniProtKB-UniRule"/>
</dbReference>
<dbReference type="Gene3D" id="1.10.20.60">
    <property type="entry name" value="Glu-tRNAGln amidotransferase C subunit, N-terminal domain"/>
    <property type="match status" value="1"/>
</dbReference>
<dbReference type="HAMAP" id="MF_00122">
    <property type="entry name" value="GatC"/>
    <property type="match status" value="1"/>
</dbReference>
<dbReference type="InterPro" id="IPR036113">
    <property type="entry name" value="Asp/Glu-ADT_sf_sub_c"/>
</dbReference>
<dbReference type="InterPro" id="IPR003837">
    <property type="entry name" value="GatC"/>
</dbReference>
<dbReference type="NCBIfam" id="TIGR00135">
    <property type="entry name" value="gatC"/>
    <property type="match status" value="1"/>
</dbReference>
<dbReference type="PANTHER" id="PTHR15004">
    <property type="entry name" value="GLUTAMYL-TRNA(GLN) AMIDOTRANSFERASE SUBUNIT C, MITOCHONDRIAL"/>
    <property type="match status" value="1"/>
</dbReference>
<dbReference type="PANTHER" id="PTHR15004:SF0">
    <property type="entry name" value="GLUTAMYL-TRNA(GLN) AMIDOTRANSFERASE SUBUNIT C, MITOCHONDRIAL"/>
    <property type="match status" value="1"/>
</dbReference>
<dbReference type="Pfam" id="PF02686">
    <property type="entry name" value="GatC"/>
    <property type="match status" value="1"/>
</dbReference>
<dbReference type="SUPFAM" id="SSF141000">
    <property type="entry name" value="Glu-tRNAGln amidotransferase C subunit"/>
    <property type="match status" value="1"/>
</dbReference>